<keyword id="KW-0963">Cytoplasm</keyword>
<keyword id="KW-0284">Flavonoid biosynthesis</keyword>
<keyword id="KW-0408">Iron</keyword>
<keyword id="KW-0479">Metal-binding</keyword>
<keyword id="KW-0560">Oxidoreductase</keyword>
<keyword id="KW-0847">Vitamin C</keyword>
<proteinExistence type="evidence at protein level"/>
<comment type="function">
    <text>Involved in the conversion of naringenin to apigenin. Acts via a direct 2,3-desaturation of flavanones instead of a sequential hydroxylation/dehydratation mechanism.</text>
</comment>
<comment type="catalytic activity">
    <reaction evidence="4 5">
        <text>a flavanone + 2-oxoglutarate + O2 = a flavone + succinate + CO2 + H2O</text>
        <dbReference type="Rhea" id="RHEA:10448"/>
        <dbReference type="ChEBI" id="CHEBI:15377"/>
        <dbReference type="ChEBI" id="CHEBI:15379"/>
        <dbReference type="ChEBI" id="CHEBI:16526"/>
        <dbReference type="ChEBI" id="CHEBI:16810"/>
        <dbReference type="ChEBI" id="CHEBI:24043"/>
        <dbReference type="ChEBI" id="CHEBI:28863"/>
        <dbReference type="ChEBI" id="CHEBI:30031"/>
        <dbReference type="EC" id="1.14.20.5"/>
    </reaction>
</comment>
<comment type="cofactor">
    <cofactor evidence="1">
        <name>Fe cation</name>
        <dbReference type="ChEBI" id="CHEBI:24875"/>
    </cofactor>
</comment>
<comment type="cofactor">
    <cofactor evidence="1">
        <name>L-ascorbate</name>
        <dbReference type="ChEBI" id="CHEBI:38290"/>
    </cofactor>
</comment>
<comment type="pathway">
    <text>Secondary metabolite biosynthesis; flavonoid biosynthesis.</text>
</comment>
<comment type="subcellular location">
    <subcellularLocation>
        <location evidence="4">Cytoplasm</location>
    </subcellularLocation>
    <text>In contrast to the microsmal flavone synthase II, FNSI is a soluble enzyme.</text>
</comment>
<comment type="similarity">
    <text evidence="6">Belongs to the iron/ascorbate-dependent oxidoreductase family.</text>
</comment>
<protein>
    <recommendedName>
        <fullName>Flavone synthase</fullName>
        <ecNumber evidence="4 5">1.14.20.5</ecNumber>
    </recommendedName>
    <alternativeName>
        <fullName>Flavone synthase I</fullName>
    </alternativeName>
</protein>
<dbReference type="EC" id="1.14.20.5" evidence="4 5"/>
<dbReference type="EMBL" id="AY230247">
    <property type="protein sequence ID" value="AAP57393.1"/>
    <property type="molecule type" value="mRNA"/>
</dbReference>
<dbReference type="EMBL" id="AY817680">
    <property type="protein sequence ID" value="AAX21541.1"/>
    <property type="molecule type" value="Genomic_DNA"/>
</dbReference>
<dbReference type="SMR" id="Q7XZQ8"/>
<dbReference type="KEGG" id="ag:AAP57393"/>
<dbReference type="BioCyc" id="MetaCyc:MONOMER-12564"/>
<dbReference type="BRENDA" id="1.14.20.5">
    <property type="organism ID" value="4694"/>
</dbReference>
<dbReference type="UniPathway" id="UPA00154"/>
<dbReference type="GO" id="GO:0005737">
    <property type="term" value="C:cytoplasm"/>
    <property type="evidence" value="ECO:0007669"/>
    <property type="project" value="UniProtKB-SubCell"/>
</dbReference>
<dbReference type="GO" id="GO:0033759">
    <property type="term" value="F:flavone synthase activity"/>
    <property type="evidence" value="ECO:0007669"/>
    <property type="project" value="UniProtKB-EC"/>
</dbReference>
<dbReference type="GO" id="GO:0031418">
    <property type="term" value="F:L-ascorbic acid binding"/>
    <property type="evidence" value="ECO:0007669"/>
    <property type="project" value="UniProtKB-KW"/>
</dbReference>
<dbReference type="GO" id="GO:0046872">
    <property type="term" value="F:metal ion binding"/>
    <property type="evidence" value="ECO:0007669"/>
    <property type="project" value="UniProtKB-KW"/>
</dbReference>
<dbReference type="FunFam" id="2.60.120.330:FF:000016">
    <property type="entry name" value="Naringenin,2-oxoglutarate 3-dioxygenase"/>
    <property type="match status" value="1"/>
</dbReference>
<dbReference type="Gene3D" id="2.60.120.330">
    <property type="entry name" value="B-lactam Antibiotic, Isopenicillin N Synthase, Chain"/>
    <property type="match status" value="1"/>
</dbReference>
<dbReference type="InterPro" id="IPR026992">
    <property type="entry name" value="DIOX_N"/>
</dbReference>
<dbReference type="InterPro" id="IPR044861">
    <property type="entry name" value="IPNS-like_FE2OG_OXY"/>
</dbReference>
<dbReference type="InterPro" id="IPR027443">
    <property type="entry name" value="IPNS-like_sf"/>
</dbReference>
<dbReference type="InterPro" id="IPR005123">
    <property type="entry name" value="Oxoglu/Fe-dep_dioxygenase_dom"/>
</dbReference>
<dbReference type="InterPro" id="IPR050295">
    <property type="entry name" value="Plant_2OG-oxidoreductases"/>
</dbReference>
<dbReference type="PANTHER" id="PTHR47991">
    <property type="entry name" value="OXOGLUTARATE/IRON-DEPENDENT DIOXYGENASE"/>
    <property type="match status" value="1"/>
</dbReference>
<dbReference type="Pfam" id="PF03171">
    <property type="entry name" value="2OG-FeII_Oxy"/>
    <property type="match status" value="1"/>
</dbReference>
<dbReference type="Pfam" id="PF14226">
    <property type="entry name" value="DIOX_N"/>
    <property type="match status" value="1"/>
</dbReference>
<dbReference type="SUPFAM" id="SSF51197">
    <property type="entry name" value="Clavaminate synthase-like"/>
    <property type="match status" value="1"/>
</dbReference>
<dbReference type="PROSITE" id="PS51471">
    <property type="entry name" value="FE2OG_OXY"/>
    <property type="match status" value="1"/>
</dbReference>
<gene>
    <name type="primary">FNSI</name>
</gene>
<sequence length="365" mass="41024">MAPTTITALAKEKTLNLDFVRDEDERPKVAYNQFSNEIPIISLAGLDDDSDGRRPEICRKIVKACEDWGIFQVVDHGIDSGLISEMTRLSREFFALPAEEKLEYDTTGGKRGGFTISTVLQGDDAMDWREFVTYFSYPINARDYSRWPKKPEGWRSTTEVYSEKLMVLGAKLLEVLSEAMGLEKGDLTKACVDMEQKVLINYYPTCPQPDLTLGVRRHTDPGTITILLQDMVGGLQATRDGGKTWITVQPVEGAFVVNLGDHGHYLSNGRFRNADHQAVVNSTSSRLSIATFQNPAQNAIVYPLKIREGEKAILDEAITYAEMYKKCMTKHIEVATRKKLAKEKRLQDEKAKLEMKSKSADENLA</sequence>
<evidence type="ECO:0000250" key="1"/>
<evidence type="ECO:0000255" key="2">
    <source>
        <dbReference type="PROSITE-ProRule" id="PRU00805"/>
    </source>
</evidence>
<evidence type="ECO:0000256" key="3">
    <source>
        <dbReference type="SAM" id="MobiDB-lite"/>
    </source>
</evidence>
<evidence type="ECO:0000269" key="4">
    <source>
    </source>
</evidence>
<evidence type="ECO:0000269" key="5">
    <source>
    </source>
</evidence>
<evidence type="ECO:0000305" key="6"/>
<feature type="chain" id="PRO_0000386540" description="Flavone synthase">
    <location>
        <begin position="1"/>
        <end position="365"/>
    </location>
</feature>
<feature type="domain" description="Fe2OG dioxygenase" evidence="2">
    <location>
        <begin position="194"/>
        <end position="295"/>
    </location>
</feature>
<feature type="region of interest" description="Disordered" evidence="3">
    <location>
        <begin position="345"/>
        <end position="365"/>
    </location>
</feature>
<feature type="binding site" evidence="2">
    <location>
        <position position="76"/>
    </location>
    <ligand>
        <name>Fe cation</name>
        <dbReference type="ChEBI" id="CHEBI:24875"/>
    </ligand>
</feature>
<feature type="binding site" evidence="2">
    <location>
        <position position="218"/>
    </location>
    <ligand>
        <name>Fe cation</name>
        <dbReference type="ChEBI" id="CHEBI:24875"/>
    </ligand>
</feature>
<feature type="binding site" evidence="2">
    <location>
        <position position="220"/>
    </location>
    <ligand>
        <name>Fe cation</name>
        <dbReference type="ChEBI" id="CHEBI:24875"/>
    </ligand>
</feature>
<feature type="binding site" evidence="2">
    <location>
        <position position="276"/>
    </location>
    <ligand>
        <name>Fe cation</name>
        <dbReference type="ChEBI" id="CHEBI:24875"/>
    </ligand>
</feature>
<organism>
    <name type="scientific">Petroselinum crispum</name>
    <name type="common">Parsley</name>
    <name type="synonym">Petroselinum hortense</name>
    <dbReference type="NCBI Taxonomy" id="4043"/>
    <lineage>
        <taxon>Eukaryota</taxon>
        <taxon>Viridiplantae</taxon>
        <taxon>Streptophyta</taxon>
        <taxon>Embryophyta</taxon>
        <taxon>Tracheophyta</taxon>
        <taxon>Spermatophyta</taxon>
        <taxon>Magnoliopsida</taxon>
        <taxon>eudicotyledons</taxon>
        <taxon>Gunneridae</taxon>
        <taxon>Pentapetalae</taxon>
        <taxon>asterids</taxon>
        <taxon>campanulids</taxon>
        <taxon>Apiales</taxon>
        <taxon>Apiaceae</taxon>
        <taxon>Apioideae</taxon>
        <taxon>apioid superclade</taxon>
        <taxon>Apieae</taxon>
        <taxon>Petroselinum</taxon>
    </lineage>
</organism>
<accession>Q7XZQ8</accession>
<reference key="1">
    <citation type="journal article" date="2001" name="Phytochemistry">
        <title>Cloning of parsley flavone synthase I.</title>
        <authorList>
            <person name="Martens S."/>
            <person name="Forkmann G."/>
            <person name="Matern U."/>
            <person name="Lukacin R."/>
        </authorList>
    </citation>
    <scope>NUCLEOTIDE SEQUENCE [MRNA]</scope>
    <scope>CATALYTIC ACTIVITY</scope>
    <scope>SUBCELLULAR LOCATION</scope>
    <source>
        <strain>cv. Italian Giant</strain>
    </source>
</reference>
<reference key="2">
    <citation type="journal article" date="2003" name="FEBS Lett.">
        <title>Divergent evolution of flavonoid 2-oxoglutarate-dependent dioxygenases in parsley.</title>
        <authorList>
            <person name="Martens S."/>
            <person name="Forkmann G."/>
            <person name="Britsch L."/>
            <person name="Wellmann F."/>
            <person name="Matern U."/>
            <person name="Lukacin R."/>
        </authorList>
    </citation>
    <scope>NUCLEOTIDE SEQUENCE [MRNA]</scope>
    <scope>CATALYTIC ACTIVITY</scope>
    <source>
        <strain>cv. Italian Giant</strain>
    </source>
</reference>
<reference key="3">
    <citation type="journal article" date="2005" name="Phytochemistry">
        <title>Molecular evolution of flavonoid dioxygenases in the family Apiaceae.</title>
        <authorList>
            <person name="Gebhardt Y."/>
            <person name="Witte S."/>
            <person name="Forkmann G."/>
            <person name="Lukacin R."/>
            <person name="Matern U."/>
            <person name="Martens S."/>
        </authorList>
    </citation>
    <scope>NUCLEOTIDE SEQUENCE [GENOMIC DNA]</scope>
</reference>
<name>FNSI_PETCR</name>